<sequence>MSKTVVRKNESLDDALRRFKRSVTKAGTLQESRKREFYEKPSVKRKRKSEAARKRKKF</sequence>
<dbReference type="EMBL" id="CP000056">
    <property type="protein sequence ID" value="AAX71690.1"/>
    <property type="status" value="ALT_INIT"/>
    <property type="molecule type" value="Genomic_DNA"/>
</dbReference>
<dbReference type="RefSeq" id="WP_000048058.1">
    <property type="nucleotide sequence ID" value="NC_007296.2"/>
</dbReference>
<dbReference type="SMR" id="Q48UB6"/>
<dbReference type="GeneID" id="93936799"/>
<dbReference type="KEGG" id="spb:M28_Spy0576"/>
<dbReference type="HOGENOM" id="CLU_159258_3_2_9"/>
<dbReference type="GO" id="GO:1990904">
    <property type="term" value="C:ribonucleoprotein complex"/>
    <property type="evidence" value="ECO:0007669"/>
    <property type="project" value="UniProtKB-KW"/>
</dbReference>
<dbReference type="GO" id="GO:0005840">
    <property type="term" value="C:ribosome"/>
    <property type="evidence" value="ECO:0007669"/>
    <property type="project" value="UniProtKB-KW"/>
</dbReference>
<dbReference type="GO" id="GO:0003735">
    <property type="term" value="F:structural constituent of ribosome"/>
    <property type="evidence" value="ECO:0007669"/>
    <property type="project" value="InterPro"/>
</dbReference>
<dbReference type="GO" id="GO:0006412">
    <property type="term" value="P:translation"/>
    <property type="evidence" value="ECO:0007669"/>
    <property type="project" value="UniProtKB-UniRule"/>
</dbReference>
<dbReference type="Gene3D" id="1.20.5.1150">
    <property type="entry name" value="Ribosomal protein S8"/>
    <property type="match status" value="1"/>
</dbReference>
<dbReference type="HAMAP" id="MF_00358">
    <property type="entry name" value="Ribosomal_bS21"/>
    <property type="match status" value="1"/>
</dbReference>
<dbReference type="InterPro" id="IPR001911">
    <property type="entry name" value="Ribosomal_bS21"/>
</dbReference>
<dbReference type="InterPro" id="IPR018278">
    <property type="entry name" value="Ribosomal_bS21_CS"/>
</dbReference>
<dbReference type="InterPro" id="IPR038380">
    <property type="entry name" value="Ribosomal_bS21_sf"/>
</dbReference>
<dbReference type="NCBIfam" id="TIGR00030">
    <property type="entry name" value="S21p"/>
    <property type="match status" value="1"/>
</dbReference>
<dbReference type="PANTHER" id="PTHR21109">
    <property type="entry name" value="MITOCHONDRIAL 28S RIBOSOMAL PROTEIN S21"/>
    <property type="match status" value="1"/>
</dbReference>
<dbReference type="PANTHER" id="PTHR21109:SF22">
    <property type="entry name" value="SMALL RIBOSOMAL SUBUNIT PROTEIN BS21"/>
    <property type="match status" value="1"/>
</dbReference>
<dbReference type="Pfam" id="PF01165">
    <property type="entry name" value="Ribosomal_S21"/>
    <property type="match status" value="1"/>
</dbReference>
<dbReference type="PRINTS" id="PR00976">
    <property type="entry name" value="RIBOSOMALS21"/>
</dbReference>
<dbReference type="PROSITE" id="PS01181">
    <property type="entry name" value="RIBOSOMAL_S21"/>
    <property type="match status" value="1"/>
</dbReference>
<accession>Q48UB6</accession>
<keyword id="KW-0687">Ribonucleoprotein</keyword>
<keyword id="KW-0689">Ribosomal protein</keyword>
<evidence type="ECO:0000255" key="1">
    <source>
        <dbReference type="HAMAP-Rule" id="MF_00358"/>
    </source>
</evidence>
<evidence type="ECO:0000256" key="2">
    <source>
        <dbReference type="SAM" id="MobiDB-lite"/>
    </source>
</evidence>
<evidence type="ECO:0000305" key="3"/>
<name>RS21_STRPM</name>
<protein>
    <recommendedName>
        <fullName evidence="1">Small ribosomal subunit protein bS21</fullName>
    </recommendedName>
    <alternativeName>
        <fullName evidence="3">30S ribosomal protein S21</fullName>
    </alternativeName>
</protein>
<feature type="chain" id="PRO_0000266780" description="Small ribosomal subunit protein bS21">
    <location>
        <begin position="1"/>
        <end position="58"/>
    </location>
</feature>
<feature type="region of interest" description="Disordered" evidence="2">
    <location>
        <begin position="36"/>
        <end position="58"/>
    </location>
</feature>
<feature type="compositionally biased region" description="Basic residues" evidence="2">
    <location>
        <begin position="43"/>
        <end position="58"/>
    </location>
</feature>
<organism>
    <name type="scientific">Streptococcus pyogenes serotype M28 (strain MGAS6180)</name>
    <dbReference type="NCBI Taxonomy" id="319701"/>
    <lineage>
        <taxon>Bacteria</taxon>
        <taxon>Bacillati</taxon>
        <taxon>Bacillota</taxon>
        <taxon>Bacilli</taxon>
        <taxon>Lactobacillales</taxon>
        <taxon>Streptococcaceae</taxon>
        <taxon>Streptococcus</taxon>
    </lineage>
</organism>
<comment type="similarity">
    <text evidence="1">Belongs to the bacterial ribosomal protein bS21 family.</text>
</comment>
<comment type="sequence caution" evidence="3">
    <conflict type="erroneous initiation">
        <sequence resource="EMBL-CDS" id="AAX71690"/>
    </conflict>
</comment>
<gene>
    <name evidence="1" type="primary">rpsU</name>
    <name type="ordered locus">M28_Spy0576</name>
</gene>
<reference key="1">
    <citation type="journal article" date="2005" name="J. Infect. Dis.">
        <title>Genome sequence of a serotype M28 strain of group A Streptococcus: potential new insights into puerperal sepsis and bacterial disease specificity.</title>
        <authorList>
            <person name="Green N.M."/>
            <person name="Zhang S."/>
            <person name="Porcella S.F."/>
            <person name="Nagiec M.J."/>
            <person name="Barbian K.D."/>
            <person name="Beres S.B."/>
            <person name="Lefebvre R.B."/>
            <person name="Musser J.M."/>
        </authorList>
    </citation>
    <scope>NUCLEOTIDE SEQUENCE [LARGE SCALE GENOMIC DNA]</scope>
    <source>
        <strain>MGAS6180</strain>
    </source>
</reference>
<proteinExistence type="inferred from homology"/>